<comment type="function">
    <text evidence="2 3">Cytokine that binds to TNFRSF1A/TNFR1 and TNFRSF1B/TNFBR. It is mainly secreted by macrophages and can induce cell death of certain tumor cell lines. It is potent pyrogen causing fever by direct action or by stimulation of interleukin-1 secretion and is implicated in the induction of cachexia, Under certain conditions it can stimulate cell proliferation and induce cell differentiation (By similarity). Induces insulin resistance in adipocytes via inhibition of insulin-induced IRS1 tyrosine phosphorylation and insulin-induced glucose uptake. Induces GKAP42 protein degradation in adipocytes which is partially responsible for TNF-induced insulin resistance (By similarity). Plays a role in angiogenesis by inducing VEGF production synergistically with IL1B and IL6 (By similarity). Promotes osteoclastogenesis and therefore mediates bone resorption (By similarity).</text>
</comment>
<comment type="function">
    <text evidence="2">The TNF intracellular domain (ICD) form induces IL12 production in dendritic cells.</text>
</comment>
<comment type="subunit">
    <text evidence="1">Homotrimer. Interacts with SPPL2B (By similarity).</text>
</comment>
<comment type="subcellular location">
    <subcellularLocation>
        <location evidence="1">Cell membrane</location>
        <topology evidence="1">Single-pass type II membrane protein</topology>
    </subcellularLocation>
</comment>
<comment type="subcellular location">
    <molecule>Tumor necrosis factor, membrane form</molecule>
    <subcellularLocation>
        <location evidence="1">Membrane</location>
        <topology evidence="1">Single-pass type II membrane protein</topology>
    </subcellularLocation>
</comment>
<comment type="subcellular location">
    <molecule>Tumor necrosis factor, soluble form</molecule>
    <subcellularLocation>
        <location evidence="1">Secreted</location>
    </subcellularLocation>
</comment>
<comment type="subcellular location">
    <molecule>C-domain 1</molecule>
    <subcellularLocation>
        <location evidence="1">Secreted</location>
    </subcellularLocation>
</comment>
<comment type="subcellular location">
    <molecule>C-domain 2</molecule>
    <subcellularLocation>
        <location evidence="1">Secreted</location>
    </subcellularLocation>
</comment>
<comment type="PTM">
    <text evidence="1">The soluble form derives from the membrane form by proteolytic processing. The membrane-bound form is further proteolytically processed by SPPL2A or SPPL2B through regulated intramembrane proteolysis producing TNF intracellular domains (ICD1 and ICD2) released in the cytosol and TNF C-domain 1 and C-domain 2 secreted into the extracellular space (By similarity).</text>
</comment>
<comment type="PTM">
    <text evidence="1">The membrane form, but not the soluble form, is phosphorylated on serine residues. Dephosphorylation of the membrane form occurs by binding to soluble TNFRSF1A/TNFR1 (By similarity).</text>
</comment>
<comment type="PTM">
    <text evidence="1">O-glycosylated; glycans contain galactose, N-acetylgalactosamine and N-acetylneuraminic acid.</text>
</comment>
<comment type="PTM">
    <molecule>Tumor necrosis factor, soluble form</molecule>
    <text evidence="2">The soluble form is demyristoylated by SIRT6, promoting its secretion.</text>
</comment>
<comment type="similarity">
    <text evidence="6">Belongs to the tumor necrosis factor family.</text>
</comment>
<accession>P79337</accession>
<name>TNFA_MACFA</name>
<protein>
    <recommendedName>
        <fullName>Tumor necrosis factor</fullName>
    </recommendedName>
    <alternativeName>
        <fullName>Cachectin</fullName>
    </alternativeName>
    <alternativeName>
        <fullName>TNF-alpha</fullName>
    </alternativeName>
    <alternativeName>
        <fullName>Tumor necrosis factor ligand superfamily member 2</fullName>
        <shortName>TNF-a</shortName>
    </alternativeName>
    <component>
        <recommendedName>
            <fullName>Tumor necrosis factor, membrane form</fullName>
        </recommendedName>
        <alternativeName>
            <fullName>N-terminal fragment</fullName>
            <shortName>NTF</shortName>
        </alternativeName>
    </component>
    <component>
        <recommendedName>
            <fullName>Intracellular domain 1</fullName>
            <shortName>ICD1</shortName>
        </recommendedName>
    </component>
    <component>
        <recommendedName>
            <fullName>Intracellular domain 2</fullName>
            <shortName>ICD2</shortName>
        </recommendedName>
    </component>
    <component>
        <recommendedName>
            <fullName>C-domain 1</fullName>
        </recommendedName>
    </component>
    <component>
        <recommendedName>
            <fullName>C-domain 2</fullName>
        </recommendedName>
    </component>
    <component>
        <recommendedName>
            <fullName>Tumor necrosis factor, soluble form</fullName>
        </recommendedName>
    </component>
</protein>
<sequence length="233" mass="25558">MSTESMIQDVELAEEALPRKTAGPQGSRRCWFLSLFSFLLVAGAATLFCLLHFGVIGPQREEFPKDPSLISPLAQAVRSSSRTPSDKPVAHVVANPQAEGQLQWLNRRANALVANGVELTDNQLVVPSEGLYLIYSQVLFKGQGCPSNHVLLTHTISRIAVSYQTKVNLLSAIKSPCQRETPEGAEAKPWYEPIYLGGVFQLEKGDRLSAEINLPDYLDFAESGQVYFGIIAL</sequence>
<organism>
    <name type="scientific">Macaca fascicularis</name>
    <name type="common">Crab-eating macaque</name>
    <name type="synonym">Cynomolgus monkey</name>
    <dbReference type="NCBI Taxonomy" id="9541"/>
    <lineage>
        <taxon>Eukaryota</taxon>
        <taxon>Metazoa</taxon>
        <taxon>Chordata</taxon>
        <taxon>Craniata</taxon>
        <taxon>Vertebrata</taxon>
        <taxon>Euteleostomi</taxon>
        <taxon>Mammalia</taxon>
        <taxon>Eutheria</taxon>
        <taxon>Euarchontoglires</taxon>
        <taxon>Primates</taxon>
        <taxon>Haplorrhini</taxon>
        <taxon>Catarrhini</taxon>
        <taxon>Cercopithecidae</taxon>
        <taxon>Cercopithecinae</taxon>
        <taxon>Macaca</taxon>
    </lineage>
</organism>
<reference key="1">
    <citation type="submission" date="1997-01" db="EMBL/GenBank/DDBJ databases">
        <title>Molecular cloning and expression of cynomolgus monkey TNF-alpha.</title>
        <authorList>
            <person name="Tatsumi M."/>
        </authorList>
    </citation>
    <scope>NUCLEOTIDE SEQUENCE [MRNA]</scope>
    <source>
        <tissue>Lymphocyte</tissue>
    </source>
</reference>
<proteinExistence type="evidence at transcript level"/>
<dbReference type="EMBL" id="AB000513">
    <property type="protein sequence ID" value="BAA19131.1"/>
    <property type="molecule type" value="mRNA"/>
</dbReference>
<dbReference type="RefSeq" id="NP_001272206.1">
    <property type="nucleotide sequence ID" value="NM_001285277.1"/>
</dbReference>
<dbReference type="SMR" id="P79337"/>
<dbReference type="STRING" id="9541.ENSMFAP00000002816"/>
<dbReference type="GlyCosmos" id="P79337">
    <property type="glycosylation" value="1 site, No reported glycans"/>
</dbReference>
<dbReference type="eggNOG" id="ENOG502S4K8">
    <property type="taxonomic scope" value="Eukaryota"/>
</dbReference>
<dbReference type="Proteomes" id="UP000233100">
    <property type="component" value="Unplaced"/>
</dbReference>
<dbReference type="GO" id="GO:0009986">
    <property type="term" value="C:cell surface"/>
    <property type="evidence" value="ECO:0007669"/>
    <property type="project" value="TreeGrafter"/>
</dbReference>
<dbReference type="GO" id="GO:0005615">
    <property type="term" value="C:extracellular space"/>
    <property type="evidence" value="ECO:0007669"/>
    <property type="project" value="UniProtKB-KW"/>
</dbReference>
<dbReference type="GO" id="GO:0005886">
    <property type="term" value="C:plasma membrane"/>
    <property type="evidence" value="ECO:0007669"/>
    <property type="project" value="UniProtKB-SubCell"/>
</dbReference>
<dbReference type="GO" id="GO:0005125">
    <property type="term" value="F:cytokine activity"/>
    <property type="evidence" value="ECO:0007669"/>
    <property type="project" value="UniProtKB-KW"/>
</dbReference>
<dbReference type="GO" id="GO:0005164">
    <property type="term" value="F:tumor necrosis factor receptor binding"/>
    <property type="evidence" value="ECO:0007669"/>
    <property type="project" value="InterPro"/>
</dbReference>
<dbReference type="GO" id="GO:0008625">
    <property type="term" value="P:extrinsic apoptotic signaling pathway via death domain receptors"/>
    <property type="evidence" value="ECO:0007669"/>
    <property type="project" value="TreeGrafter"/>
</dbReference>
<dbReference type="GO" id="GO:0006955">
    <property type="term" value="P:immune response"/>
    <property type="evidence" value="ECO:0007669"/>
    <property type="project" value="InterPro"/>
</dbReference>
<dbReference type="GO" id="GO:0097527">
    <property type="term" value="P:necroptotic signaling pathway"/>
    <property type="evidence" value="ECO:0000250"/>
    <property type="project" value="CAFA"/>
</dbReference>
<dbReference type="GO" id="GO:0043242">
    <property type="term" value="P:negative regulation of protein-containing complex disassembly"/>
    <property type="evidence" value="ECO:0000250"/>
    <property type="project" value="UniProtKB"/>
</dbReference>
<dbReference type="GO" id="GO:0043065">
    <property type="term" value="P:positive regulation of apoptotic process"/>
    <property type="evidence" value="ECO:0000250"/>
    <property type="project" value="UniProtKB"/>
</dbReference>
<dbReference type="GO" id="GO:0043123">
    <property type="term" value="P:positive regulation of canonical NF-kappaB signal transduction"/>
    <property type="evidence" value="ECO:0007669"/>
    <property type="project" value="TreeGrafter"/>
</dbReference>
<dbReference type="GO" id="GO:2001238">
    <property type="term" value="P:positive regulation of extrinsic apoptotic signaling pathway"/>
    <property type="evidence" value="ECO:0007669"/>
    <property type="project" value="TreeGrafter"/>
</dbReference>
<dbReference type="GO" id="GO:0043507">
    <property type="term" value="P:positive regulation of JUN kinase activity"/>
    <property type="evidence" value="ECO:0000250"/>
    <property type="project" value="UniProtKB"/>
</dbReference>
<dbReference type="GO" id="GO:0043406">
    <property type="term" value="P:positive regulation of MAP kinase activity"/>
    <property type="evidence" value="ECO:0000250"/>
    <property type="project" value="UniProtKB"/>
</dbReference>
<dbReference type="GO" id="GO:0051092">
    <property type="term" value="P:positive regulation of NF-kappaB transcription factor activity"/>
    <property type="evidence" value="ECO:0000250"/>
    <property type="project" value="UniProtKB"/>
</dbReference>
<dbReference type="GO" id="GO:0001934">
    <property type="term" value="P:positive regulation of protein phosphorylation"/>
    <property type="evidence" value="ECO:0000250"/>
    <property type="project" value="UniProtKB"/>
</dbReference>
<dbReference type="GO" id="GO:0043243">
    <property type="term" value="P:positive regulation of protein-containing complex disassembly"/>
    <property type="evidence" value="ECO:0000250"/>
    <property type="project" value="UniProtKB"/>
</dbReference>
<dbReference type="GO" id="GO:0045944">
    <property type="term" value="P:positive regulation of transcription by RNA polymerase II"/>
    <property type="evidence" value="ECO:0007669"/>
    <property type="project" value="TreeGrafter"/>
</dbReference>
<dbReference type="GO" id="GO:0065008">
    <property type="term" value="P:regulation of biological quality"/>
    <property type="evidence" value="ECO:0007669"/>
    <property type="project" value="UniProtKB-ARBA"/>
</dbReference>
<dbReference type="GO" id="GO:0050793">
    <property type="term" value="P:regulation of developmental process"/>
    <property type="evidence" value="ECO:0007669"/>
    <property type="project" value="UniProtKB-ARBA"/>
</dbReference>
<dbReference type="GO" id="GO:0051239">
    <property type="term" value="P:regulation of multicellular organismal process"/>
    <property type="evidence" value="ECO:0007669"/>
    <property type="project" value="UniProtKB-ARBA"/>
</dbReference>
<dbReference type="GO" id="GO:0051046">
    <property type="term" value="P:regulation of secretion"/>
    <property type="evidence" value="ECO:0007669"/>
    <property type="project" value="UniProtKB-ARBA"/>
</dbReference>
<dbReference type="GO" id="GO:0033209">
    <property type="term" value="P:tumor necrosis factor-mediated signaling pathway"/>
    <property type="evidence" value="ECO:0007669"/>
    <property type="project" value="TreeGrafter"/>
</dbReference>
<dbReference type="GO" id="GO:0010573">
    <property type="term" value="P:vascular endothelial growth factor production"/>
    <property type="evidence" value="ECO:0000250"/>
    <property type="project" value="UniProtKB"/>
</dbReference>
<dbReference type="CDD" id="cd00184">
    <property type="entry name" value="TNF"/>
    <property type="match status" value="1"/>
</dbReference>
<dbReference type="FunFam" id="2.60.120.40:FF:000007">
    <property type="entry name" value="Tumor necrosis factor"/>
    <property type="match status" value="1"/>
</dbReference>
<dbReference type="Gene3D" id="2.60.120.40">
    <property type="match status" value="1"/>
</dbReference>
<dbReference type="InterPro" id="IPR006053">
    <property type="entry name" value="TNF"/>
</dbReference>
<dbReference type="InterPro" id="IPR002959">
    <property type="entry name" value="TNF_alpha"/>
</dbReference>
<dbReference type="InterPro" id="IPR021184">
    <property type="entry name" value="TNF_CS"/>
</dbReference>
<dbReference type="InterPro" id="IPR006052">
    <property type="entry name" value="TNF_dom"/>
</dbReference>
<dbReference type="InterPro" id="IPR008983">
    <property type="entry name" value="Tumour_necrosis_fac-like_dom"/>
</dbReference>
<dbReference type="PANTHER" id="PTHR11471:SF23">
    <property type="entry name" value="TUMOR NECROSIS FACTOR"/>
    <property type="match status" value="1"/>
</dbReference>
<dbReference type="PANTHER" id="PTHR11471">
    <property type="entry name" value="TUMOR NECROSIS FACTOR FAMILY MEMBER"/>
    <property type="match status" value="1"/>
</dbReference>
<dbReference type="Pfam" id="PF00229">
    <property type="entry name" value="TNF"/>
    <property type="match status" value="1"/>
</dbReference>
<dbReference type="PRINTS" id="PR01234">
    <property type="entry name" value="TNECROSISFCT"/>
</dbReference>
<dbReference type="PRINTS" id="PR01235">
    <property type="entry name" value="TNFALPHA"/>
</dbReference>
<dbReference type="SMART" id="SM00207">
    <property type="entry name" value="TNF"/>
    <property type="match status" value="1"/>
</dbReference>
<dbReference type="SUPFAM" id="SSF49842">
    <property type="entry name" value="TNF-like"/>
    <property type="match status" value="1"/>
</dbReference>
<dbReference type="PROSITE" id="PS00251">
    <property type="entry name" value="THD_1"/>
    <property type="match status" value="1"/>
</dbReference>
<dbReference type="PROSITE" id="PS50049">
    <property type="entry name" value="THD_2"/>
    <property type="match status" value="1"/>
</dbReference>
<gene>
    <name type="primary">TNF</name>
    <name type="synonym">TNFA</name>
    <name type="synonym">TNFSF2</name>
</gene>
<keyword id="KW-1003">Cell membrane</keyword>
<keyword id="KW-0202">Cytokine</keyword>
<keyword id="KW-1015">Disulfide bond</keyword>
<keyword id="KW-0325">Glycoprotein</keyword>
<keyword id="KW-0449">Lipoprotein</keyword>
<keyword id="KW-0472">Membrane</keyword>
<keyword id="KW-0519">Myristate</keyword>
<keyword id="KW-0597">Phosphoprotein</keyword>
<keyword id="KW-1185">Reference proteome</keyword>
<keyword id="KW-0964">Secreted</keyword>
<keyword id="KW-0735">Signal-anchor</keyword>
<keyword id="KW-0812">Transmembrane</keyword>
<keyword id="KW-1133">Transmembrane helix</keyword>
<feature type="chain" id="PRO_0000034429" description="Tumor necrosis factor, membrane form">
    <location>
        <begin position="1"/>
        <end position="233"/>
    </location>
</feature>
<feature type="chain" id="PRO_0000417243" description="Intracellular domain 1" evidence="1">
    <location>
        <begin position="1"/>
        <end position="39"/>
    </location>
</feature>
<feature type="chain" id="PRO_0000417244" description="Intracellular domain 2" evidence="1">
    <location>
        <begin position="1"/>
        <end position="35"/>
    </location>
</feature>
<feature type="chain" id="PRO_0000417245" description="C-domain 1" evidence="1">
    <location>
        <begin position="50"/>
        <end status="unknown"/>
    </location>
</feature>
<feature type="chain" id="PRO_0000417246" description="C-domain 2" evidence="1">
    <location>
        <begin position="52"/>
        <end status="unknown"/>
    </location>
</feature>
<feature type="chain" id="PRO_0000034430" description="Tumor necrosis factor, soluble form">
    <location>
        <begin position="77"/>
        <end position="233"/>
    </location>
</feature>
<feature type="topological domain" description="Cytoplasmic" evidence="4">
    <location>
        <begin position="1"/>
        <end position="35"/>
    </location>
</feature>
<feature type="transmembrane region" description="Helical; Signal-anchor for type II membrane protein" evidence="4">
    <location>
        <begin position="36"/>
        <end position="56"/>
    </location>
</feature>
<feature type="topological domain" description="Extracellular" evidence="4">
    <location>
        <begin position="57"/>
        <end position="233"/>
    </location>
</feature>
<feature type="domain" description="THD" evidence="5">
    <location>
        <begin position="88"/>
        <end position="233"/>
    </location>
</feature>
<feature type="site" description="Cleavage; by SPPL2A or SPPL2B" evidence="1">
    <location>
        <begin position="34"/>
        <end position="35"/>
    </location>
</feature>
<feature type="site" description="Cleavage; by SPPL2A or SPPL2B" evidence="1">
    <location>
        <begin position="39"/>
        <end position="40"/>
    </location>
</feature>
<feature type="site" description="Cleavage; by SPPL2A or SPPL2B" evidence="1">
    <location>
        <begin position="49"/>
        <end position="50"/>
    </location>
</feature>
<feature type="site" description="Cleavage; by SPPL2A or SPPL2B" evidence="1">
    <location>
        <begin position="51"/>
        <end position="52"/>
    </location>
</feature>
<feature type="site" description="Cleavage; by ADAM17" evidence="1">
    <location>
        <begin position="76"/>
        <end position="77"/>
    </location>
</feature>
<feature type="modified residue" description="Phosphoserine; by CK1" evidence="1">
    <location>
        <position position="2"/>
    </location>
</feature>
<feature type="lipid moiety-binding region" description="N6-myristoyl lysine" evidence="2">
    <location>
        <position position="20"/>
    </location>
</feature>
<feature type="glycosylation site" description="O-linked (GalNAc...) serine; in soluble form" evidence="1">
    <location>
        <position position="80"/>
    </location>
</feature>
<feature type="disulfide bond" evidence="5">
    <location>
        <begin position="145"/>
        <end position="177"/>
    </location>
</feature>
<evidence type="ECO:0000250" key="1"/>
<evidence type="ECO:0000250" key="2">
    <source>
        <dbReference type="UniProtKB" id="P01375"/>
    </source>
</evidence>
<evidence type="ECO:0000250" key="3">
    <source>
        <dbReference type="UniProtKB" id="P06804"/>
    </source>
</evidence>
<evidence type="ECO:0000255" key="4"/>
<evidence type="ECO:0000255" key="5">
    <source>
        <dbReference type="PROSITE-ProRule" id="PRU01387"/>
    </source>
</evidence>
<evidence type="ECO:0000305" key="6"/>